<comment type="function">
    <text evidence="1">Catalyzes the reversible transfer of the terminal phosphate group between ATP and AMP. Plays an important role in cellular energy homeostasis and in adenine nucleotide metabolism.</text>
</comment>
<comment type="catalytic activity">
    <reaction evidence="1">
        <text>AMP + ATP = 2 ADP</text>
        <dbReference type="Rhea" id="RHEA:12973"/>
        <dbReference type="ChEBI" id="CHEBI:30616"/>
        <dbReference type="ChEBI" id="CHEBI:456215"/>
        <dbReference type="ChEBI" id="CHEBI:456216"/>
        <dbReference type="EC" id="2.7.4.3"/>
    </reaction>
</comment>
<comment type="pathway">
    <text evidence="1">Purine metabolism; AMP biosynthesis via salvage pathway; AMP from ADP: step 1/1.</text>
</comment>
<comment type="subunit">
    <text evidence="1">Monomer.</text>
</comment>
<comment type="subcellular location">
    <subcellularLocation>
        <location evidence="1">Cytoplasm</location>
    </subcellularLocation>
</comment>
<comment type="domain">
    <text evidence="1">Consists of three domains, a large central CORE domain and two small peripheral domains, NMPbind and LID, which undergo movements during catalysis. The LID domain closes over the site of phosphoryl transfer upon ATP binding. Assembling and dissambling the active center during each catalytic cycle provides an effective means to prevent ATP hydrolysis.</text>
</comment>
<comment type="similarity">
    <text evidence="1">Belongs to the adenylate kinase family.</text>
</comment>
<feature type="chain" id="PRO_1000204428" description="Adenylate kinase">
    <location>
        <begin position="1"/>
        <end position="217"/>
    </location>
</feature>
<feature type="region of interest" description="NMP" evidence="1">
    <location>
        <begin position="30"/>
        <end position="59"/>
    </location>
</feature>
<feature type="region of interest" description="LID" evidence="1">
    <location>
        <begin position="122"/>
        <end position="159"/>
    </location>
</feature>
<feature type="binding site" evidence="1">
    <location>
        <begin position="10"/>
        <end position="15"/>
    </location>
    <ligand>
        <name>ATP</name>
        <dbReference type="ChEBI" id="CHEBI:30616"/>
    </ligand>
</feature>
<feature type="binding site" evidence="1">
    <location>
        <position position="31"/>
    </location>
    <ligand>
        <name>AMP</name>
        <dbReference type="ChEBI" id="CHEBI:456215"/>
    </ligand>
</feature>
<feature type="binding site" evidence="1">
    <location>
        <position position="36"/>
    </location>
    <ligand>
        <name>AMP</name>
        <dbReference type="ChEBI" id="CHEBI:456215"/>
    </ligand>
</feature>
<feature type="binding site" evidence="1">
    <location>
        <begin position="57"/>
        <end position="59"/>
    </location>
    <ligand>
        <name>AMP</name>
        <dbReference type="ChEBI" id="CHEBI:456215"/>
    </ligand>
</feature>
<feature type="binding site" evidence="1">
    <location>
        <begin position="85"/>
        <end position="88"/>
    </location>
    <ligand>
        <name>AMP</name>
        <dbReference type="ChEBI" id="CHEBI:456215"/>
    </ligand>
</feature>
<feature type="binding site" evidence="1">
    <location>
        <position position="92"/>
    </location>
    <ligand>
        <name>AMP</name>
        <dbReference type="ChEBI" id="CHEBI:456215"/>
    </ligand>
</feature>
<feature type="binding site" evidence="1">
    <location>
        <position position="123"/>
    </location>
    <ligand>
        <name>ATP</name>
        <dbReference type="ChEBI" id="CHEBI:30616"/>
    </ligand>
</feature>
<feature type="binding site" evidence="1">
    <location>
        <begin position="132"/>
        <end position="133"/>
    </location>
    <ligand>
        <name>ATP</name>
        <dbReference type="ChEBI" id="CHEBI:30616"/>
    </ligand>
</feature>
<feature type="binding site" evidence="1">
    <location>
        <position position="156"/>
    </location>
    <ligand>
        <name>AMP</name>
        <dbReference type="ChEBI" id="CHEBI:456215"/>
    </ligand>
</feature>
<feature type="binding site" evidence="1">
    <location>
        <position position="167"/>
    </location>
    <ligand>
        <name>AMP</name>
        <dbReference type="ChEBI" id="CHEBI:456215"/>
    </ligand>
</feature>
<feature type="binding site" evidence="1">
    <location>
        <position position="202"/>
    </location>
    <ligand>
        <name>ATP</name>
        <dbReference type="ChEBI" id="CHEBI:30616"/>
    </ligand>
</feature>
<protein>
    <recommendedName>
        <fullName evidence="1">Adenylate kinase</fullName>
        <shortName evidence="1">AK</shortName>
        <ecNumber evidence="1">2.7.4.3</ecNumber>
    </recommendedName>
    <alternativeName>
        <fullName evidence="1">ATP-AMP transphosphorylase</fullName>
    </alternativeName>
    <alternativeName>
        <fullName evidence="1">ATP:AMP phosphotransferase</fullName>
    </alternativeName>
    <alternativeName>
        <fullName evidence="1">Adenylate monophosphate kinase</fullName>
    </alternativeName>
</protein>
<sequence>MRIILLGAPGAGKGTQAKFIMEAFEIPQISTGDMLRAAVKAGSPLGVKVKDIMASGQLVSDDIIIDLVKERISKPDCANGFLFDGFPRTIPQAEALTESGVEIEHVMEIHVDDEEIVARLSGRRVHEASGRIYHVTHNPPKTEGVDDITGEPLVQRDDDQEDTVRNRLSIYHDQTEPLVEYYQKQEAENPGTVKFTRIAGVGPLAEIKDKVLSALGK</sequence>
<keyword id="KW-0067">ATP-binding</keyword>
<keyword id="KW-0963">Cytoplasm</keyword>
<keyword id="KW-0418">Kinase</keyword>
<keyword id="KW-0545">Nucleotide biosynthesis</keyword>
<keyword id="KW-0547">Nucleotide-binding</keyword>
<keyword id="KW-1185">Reference proteome</keyword>
<keyword id="KW-0808">Transferase</keyword>
<organism>
    <name type="scientific">Teredinibacter turnerae (strain ATCC 39867 / T7901)</name>
    <dbReference type="NCBI Taxonomy" id="377629"/>
    <lineage>
        <taxon>Bacteria</taxon>
        <taxon>Pseudomonadati</taxon>
        <taxon>Pseudomonadota</taxon>
        <taxon>Gammaproteobacteria</taxon>
        <taxon>Cellvibrionales</taxon>
        <taxon>Cellvibrionaceae</taxon>
        <taxon>Teredinibacter</taxon>
    </lineage>
</organism>
<dbReference type="EC" id="2.7.4.3" evidence="1"/>
<dbReference type="EMBL" id="CP001614">
    <property type="protein sequence ID" value="ACR11806.1"/>
    <property type="molecule type" value="Genomic_DNA"/>
</dbReference>
<dbReference type="RefSeq" id="WP_015817917.1">
    <property type="nucleotide sequence ID" value="NC_012997.1"/>
</dbReference>
<dbReference type="SMR" id="C5BRP4"/>
<dbReference type="STRING" id="377629.TERTU_1196"/>
<dbReference type="KEGG" id="ttu:TERTU_1196"/>
<dbReference type="eggNOG" id="COG0563">
    <property type="taxonomic scope" value="Bacteria"/>
</dbReference>
<dbReference type="HOGENOM" id="CLU_032354_1_2_6"/>
<dbReference type="OrthoDB" id="9805030at2"/>
<dbReference type="UniPathway" id="UPA00588">
    <property type="reaction ID" value="UER00649"/>
</dbReference>
<dbReference type="Proteomes" id="UP000009080">
    <property type="component" value="Chromosome"/>
</dbReference>
<dbReference type="GO" id="GO:0005737">
    <property type="term" value="C:cytoplasm"/>
    <property type="evidence" value="ECO:0007669"/>
    <property type="project" value="UniProtKB-SubCell"/>
</dbReference>
<dbReference type="GO" id="GO:0004017">
    <property type="term" value="F:adenylate kinase activity"/>
    <property type="evidence" value="ECO:0007669"/>
    <property type="project" value="UniProtKB-UniRule"/>
</dbReference>
<dbReference type="GO" id="GO:0005524">
    <property type="term" value="F:ATP binding"/>
    <property type="evidence" value="ECO:0007669"/>
    <property type="project" value="UniProtKB-UniRule"/>
</dbReference>
<dbReference type="GO" id="GO:0044209">
    <property type="term" value="P:AMP salvage"/>
    <property type="evidence" value="ECO:0007669"/>
    <property type="project" value="UniProtKB-UniRule"/>
</dbReference>
<dbReference type="CDD" id="cd01428">
    <property type="entry name" value="ADK"/>
    <property type="match status" value="1"/>
</dbReference>
<dbReference type="FunFam" id="3.40.50.300:FF:000106">
    <property type="entry name" value="Adenylate kinase mitochondrial"/>
    <property type="match status" value="1"/>
</dbReference>
<dbReference type="Gene3D" id="3.40.50.300">
    <property type="entry name" value="P-loop containing nucleotide triphosphate hydrolases"/>
    <property type="match status" value="1"/>
</dbReference>
<dbReference type="HAMAP" id="MF_00235">
    <property type="entry name" value="Adenylate_kinase_Adk"/>
    <property type="match status" value="1"/>
</dbReference>
<dbReference type="InterPro" id="IPR006259">
    <property type="entry name" value="Adenyl_kin_sub"/>
</dbReference>
<dbReference type="InterPro" id="IPR000850">
    <property type="entry name" value="Adenylat/UMP-CMP_kin"/>
</dbReference>
<dbReference type="InterPro" id="IPR033690">
    <property type="entry name" value="Adenylat_kinase_CS"/>
</dbReference>
<dbReference type="InterPro" id="IPR007862">
    <property type="entry name" value="Adenylate_kinase_lid-dom"/>
</dbReference>
<dbReference type="InterPro" id="IPR027417">
    <property type="entry name" value="P-loop_NTPase"/>
</dbReference>
<dbReference type="NCBIfam" id="TIGR01351">
    <property type="entry name" value="adk"/>
    <property type="match status" value="1"/>
</dbReference>
<dbReference type="NCBIfam" id="NF001379">
    <property type="entry name" value="PRK00279.1-1"/>
    <property type="match status" value="1"/>
</dbReference>
<dbReference type="NCBIfam" id="NF001380">
    <property type="entry name" value="PRK00279.1-2"/>
    <property type="match status" value="1"/>
</dbReference>
<dbReference type="NCBIfam" id="NF001381">
    <property type="entry name" value="PRK00279.1-3"/>
    <property type="match status" value="1"/>
</dbReference>
<dbReference type="NCBIfam" id="NF011100">
    <property type="entry name" value="PRK14527.1"/>
    <property type="match status" value="1"/>
</dbReference>
<dbReference type="PANTHER" id="PTHR23359">
    <property type="entry name" value="NUCLEOTIDE KINASE"/>
    <property type="match status" value="1"/>
</dbReference>
<dbReference type="Pfam" id="PF00406">
    <property type="entry name" value="ADK"/>
    <property type="match status" value="1"/>
</dbReference>
<dbReference type="Pfam" id="PF05191">
    <property type="entry name" value="ADK_lid"/>
    <property type="match status" value="1"/>
</dbReference>
<dbReference type="PRINTS" id="PR00094">
    <property type="entry name" value="ADENYLTKNASE"/>
</dbReference>
<dbReference type="SUPFAM" id="SSF52540">
    <property type="entry name" value="P-loop containing nucleoside triphosphate hydrolases"/>
    <property type="match status" value="1"/>
</dbReference>
<dbReference type="PROSITE" id="PS00113">
    <property type="entry name" value="ADENYLATE_KINASE"/>
    <property type="match status" value="1"/>
</dbReference>
<name>KAD_TERTT</name>
<reference key="1">
    <citation type="journal article" date="2009" name="PLoS ONE">
        <title>The complete genome of Teredinibacter turnerae T7901: an intracellular endosymbiont of marine wood-boring bivalves (shipworms).</title>
        <authorList>
            <person name="Yang J.C."/>
            <person name="Madupu R."/>
            <person name="Durkin A.S."/>
            <person name="Ekborg N.A."/>
            <person name="Pedamallu C.S."/>
            <person name="Hostetler J.B."/>
            <person name="Radune D."/>
            <person name="Toms B.S."/>
            <person name="Henrissat B."/>
            <person name="Coutinho P.M."/>
            <person name="Schwarz S."/>
            <person name="Field L."/>
            <person name="Trindade-Silva A.E."/>
            <person name="Soares C.A.G."/>
            <person name="Elshahawi S."/>
            <person name="Hanora A."/>
            <person name="Schmidt E.W."/>
            <person name="Haygood M.G."/>
            <person name="Posfai J."/>
            <person name="Benner J."/>
            <person name="Madinger C."/>
            <person name="Nove J."/>
            <person name="Anton B."/>
            <person name="Chaudhary K."/>
            <person name="Foster J."/>
            <person name="Holman A."/>
            <person name="Kumar S."/>
            <person name="Lessard P.A."/>
            <person name="Luyten Y.A."/>
            <person name="Slatko B."/>
            <person name="Wood N."/>
            <person name="Wu B."/>
            <person name="Teplitski M."/>
            <person name="Mougous J.D."/>
            <person name="Ward N."/>
            <person name="Eisen J.A."/>
            <person name="Badger J.H."/>
            <person name="Distel D.L."/>
        </authorList>
    </citation>
    <scope>NUCLEOTIDE SEQUENCE [LARGE SCALE GENOMIC DNA]</scope>
    <source>
        <strain>ATCC 39867 / T7901</strain>
    </source>
</reference>
<proteinExistence type="inferred from homology"/>
<gene>
    <name evidence="1" type="primary">adk</name>
    <name type="ordered locus">TERTU_1196</name>
</gene>
<evidence type="ECO:0000255" key="1">
    <source>
        <dbReference type="HAMAP-Rule" id="MF_00235"/>
    </source>
</evidence>
<accession>C5BRP4</accession>